<name>AF1L2_BOVIN</name>
<reference key="1">
    <citation type="submission" date="2006-06" db="EMBL/GenBank/DDBJ databases">
        <authorList>
            <consortium name="NIH - Mammalian Gene Collection (MGC) project"/>
        </authorList>
    </citation>
    <scope>NUCLEOTIDE SEQUENCE [LARGE SCALE MRNA]</scope>
    <source>
        <strain>Hereford</strain>
        <tissue>Uterus</tissue>
    </source>
</reference>
<feature type="chain" id="PRO_0000361276" description="Actin filament-associated protein 1-like 2">
    <location>
        <begin position="1"/>
        <end position="817"/>
    </location>
</feature>
<feature type="domain" description="PH 1" evidence="4">
    <location>
        <begin position="175"/>
        <end position="271"/>
    </location>
</feature>
<feature type="domain" description="PH 2" evidence="4">
    <location>
        <begin position="353"/>
        <end position="447"/>
    </location>
</feature>
<feature type="region of interest" description="Disordered" evidence="5">
    <location>
        <begin position="63"/>
        <end position="164"/>
    </location>
</feature>
<feature type="region of interest" description="Disordered" evidence="5">
    <location>
        <begin position="512"/>
        <end position="657"/>
    </location>
</feature>
<feature type="region of interest" description="Disordered" evidence="5">
    <location>
        <begin position="754"/>
        <end position="786"/>
    </location>
</feature>
<feature type="coiled-coil region" evidence="3">
    <location>
        <begin position="652"/>
        <end position="748"/>
    </location>
</feature>
<feature type="compositionally biased region" description="Acidic residues" evidence="5">
    <location>
        <begin position="123"/>
        <end position="139"/>
    </location>
</feature>
<feature type="compositionally biased region" description="Low complexity" evidence="5">
    <location>
        <begin position="512"/>
        <end position="528"/>
    </location>
</feature>
<feature type="compositionally biased region" description="Polar residues" evidence="5">
    <location>
        <begin position="754"/>
        <end position="763"/>
    </location>
</feature>
<feature type="compositionally biased region" description="Low complexity" evidence="5">
    <location>
        <begin position="767"/>
        <end position="782"/>
    </location>
</feature>
<feature type="modified residue" description="Phosphotyrosine" evidence="2">
    <location>
        <position position="56"/>
    </location>
</feature>
<feature type="modified residue" description="Phosphoserine" evidence="2">
    <location>
        <position position="408"/>
    </location>
</feature>
<feature type="modified residue" description="Phosphotyrosine" evidence="2">
    <location>
        <position position="413"/>
    </location>
</feature>
<feature type="modified residue" description="Phosphoserine" evidence="2">
    <location>
        <position position="484"/>
    </location>
</feature>
<evidence type="ECO:0000250" key="1"/>
<evidence type="ECO:0000250" key="2">
    <source>
        <dbReference type="UniProtKB" id="Q5DTU0"/>
    </source>
</evidence>
<evidence type="ECO:0000255" key="3"/>
<evidence type="ECO:0000255" key="4">
    <source>
        <dbReference type="PROSITE-ProRule" id="PRU00145"/>
    </source>
</evidence>
<evidence type="ECO:0000256" key="5">
    <source>
        <dbReference type="SAM" id="MobiDB-lite"/>
    </source>
</evidence>
<organism>
    <name type="scientific">Bos taurus</name>
    <name type="common">Bovine</name>
    <dbReference type="NCBI Taxonomy" id="9913"/>
    <lineage>
        <taxon>Eukaryota</taxon>
        <taxon>Metazoa</taxon>
        <taxon>Chordata</taxon>
        <taxon>Craniata</taxon>
        <taxon>Vertebrata</taxon>
        <taxon>Euteleostomi</taxon>
        <taxon>Mammalia</taxon>
        <taxon>Eutheria</taxon>
        <taxon>Laurasiatheria</taxon>
        <taxon>Artiodactyla</taxon>
        <taxon>Ruminantia</taxon>
        <taxon>Pecora</taxon>
        <taxon>Bovidae</taxon>
        <taxon>Bovinae</taxon>
        <taxon>Bos</taxon>
    </lineage>
</organism>
<accession>Q17R10</accession>
<proteinExistence type="evidence at transcript level"/>
<comment type="function">
    <text evidence="1">May play a role in a signaling cascade by enhancing the kinase activity of SRC. Contributes to SRC-regulated transcription activation (By similarity).</text>
</comment>
<comment type="subunit">
    <text evidence="1">Interacts with SRC. Interacts with LCK when tyrosine phosphorylated (By similarity).</text>
</comment>
<comment type="subcellular location">
    <subcellularLocation>
        <location evidence="1">Cytoplasm</location>
    </subcellularLocation>
</comment>
<comment type="PTM">
    <text evidence="1">Tyrosine phosphorylated (by SRC).</text>
</comment>
<sequence>MERFKALEQLLTELDDFLRILDQENLSSTAVVKKSGLAELLRLYTKSSSSDEEYIYMNKVTVHKQQNAESQDKAPEQQNPLTNGEPPQPSSAPQKSLPDLPPPKMIPERKQLSVPKIESPEGYYEEAEPYDTSLNEDGEAVSSSYESYDEEESSKGKSAPHQWPSPEASIELMRDARICAFLWRKKWLGQWAKQLCVIKDTRLLCYKSSKDHSPQLDVSLLGSSVVHKEKQVRKKEHKLKITPLNADVIVLGLQSRDQAEQWLRVIQEVSGLPSEGACEGSQFTPDAQRLSCPKPDITEKYLSASECGSPIDGHPEVPETKDVKKKCSAGLKLSNLMNLGRKKSTSLEPPDRSLETSSYLNVLVNSQWKSRWCSVRDSHLYFYQDRNRSKAAQQPLSLLGCEVVPDPSPDHLYSFRILHNGEELAKLEAKSSEEMGHWLGLLLSESGSKTDPEEFTYDYVDADRVSCIVSAAKTSLLLMQRKFSEPNTYIDGLPSQDRQELLYDDVEVSELTTAGEAPEEATPATDAPGEPDPDRVYLDLTPIKSFLHGDSGARAPSPTPPHQDPPAETLPLPEDSDPAPDEPLIKSPENPELQMQQESQEPEEPSLGGTEVKLQAGQQKTSPSPSCPDTVAVTPAGSSPPVKDRLKAASPEIKLGKNRTEAEVKRYTEEKERLEKKKEEIRGHLAQLRREKRELKETLLKCTDKGAAASLEQKLREVDEECRVEERRRVDLELSIVEVKDSLRKAEAGPVTLGTTVDTTHLESVSPRPKAATPTPAPDCTPVNSATALKNRPLSVMVTGKGTVLQKAKEWEKKGAS</sequence>
<protein>
    <recommendedName>
        <fullName>Actin filament-associated protein 1-like 2</fullName>
        <shortName>AFAP1-like protein 2</shortName>
    </recommendedName>
</protein>
<keyword id="KW-0175">Coiled coil</keyword>
<keyword id="KW-0963">Cytoplasm</keyword>
<keyword id="KW-0597">Phosphoprotein</keyword>
<keyword id="KW-1185">Reference proteome</keyword>
<keyword id="KW-0677">Repeat</keyword>
<gene>
    <name type="primary">AFAP1L2</name>
</gene>
<dbReference type="EMBL" id="BC118084">
    <property type="protein sequence ID" value="AAI18085.1"/>
    <property type="molecule type" value="mRNA"/>
</dbReference>
<dbReference type="RefSeq" id="NP_001069843.1">
    <property type="nucleotide sequence ID" value="NM_001076375.1"/>
</dbReference>
<dbReference type="SMR" id="Q17R10"/>
<dbReference type="FunCoup" id="Q17R10">
    <property type="interactions" value="267"/>
</dbReference>
<dbReference type="STRING" id="9913.ENSBTAP00000058656"/>
<dbReference type="iPTMnet" id="Q17R10"/>
<dbReference type="PaxDb" id="9913-ENSBTAP00000006439"/>
<dbReference type="GeneID" id="615436"/>
<dbReference type="KEGG" id="bta:615436"/>
<dbReference type="CTD" id="84632"/>
<dbReference type="eggNOG" id="ENOG502QQA8">
    <property type="taxonomic scope" value="Eukaryota"/>
</dbReference>
<dbReference type="HOGENOM" id="CLU_014418_0_0_1"/>
<dbReference type="InParanoid" id="Q17R10"/>
<dbReference type="OrthoDB" id="8443615at2759"/>
<dbReference type="TreeFam" id="TF332622"/>
<dbReference type="Proteomes" id="UP000009136">
    <property type="component" value="Unplaced"/>
</dbReference>
<dbReference type="GO" id="GO:0005829">
    <property type="term" value="C:cytosol"/>
    <property type="evidence" value="ECO:0000318"/>
    <property type="project" value="GO_Central"/>
</dbReference>
<dbReference type="GO" id="GO:0030296">
    <property type="term" value="F:protein tyrosine kinase activator activity"/>
    <property type="evidence" value="ECO:0000318"/>
    <property type="project" value="GO_Central"/>
</dbReference>
<dbReference type="GO" id="GO:0006954">
    <property type="term" value="P:inflammatory response"/>
    <property type="evidence" value="ECO:0000318"/>
    <property type="project" value="GO_Central"/>
</dbReference>
<dbReference type="GO" id="GO:0045893">
    <property type="term" value="P:positive regulation of DNA-templated transcription"/>
    <property type="evidence" value="ECO:0000318"/>
    <property type="project" value="GO_Central"/>
</dbReference>
<dbReference type="GO" id="GO:0045742">
    <property type="term" value="P:positive regulation of epidermal growth factor receptor signaling pathway"/>
    <property type="evidence" value="ECO:0000318"/>
    <property type="project" value="GO_Central"/>
</dbReference>
<dbReference type="GO" id="GO:0007346">
    <property type="term" value="P:regulation of mitotic cell cycle"/>
    <property type="evidence" value="ECO:0000318"/>
    <property type="project" value="GO_Central"/>
</dbReference>
<dbReference type="CDD" id="cd13306">
    <property type="entry name" value="PH1_AFAP"/>
    <property type="match status" value="1"/>
</dbReference>
<dbReference type="CDD" id="cd13307">
    <property type="entry name" value="PH2_AFAP"/>
    <property type="match status" value="1"/>
</dbReference>
<dbReference type="FunFam" id="2.30.29.30:FF:000020">
    <property type="entry name" value="Actin filament-associated protein 1-like 2 isoform 1"/>
    <property type="match status" value="1"/>
</dbReference>
<dbReference type="FunFam" id="2.30.29.30:FF:000171">
    <property type="entry name" value="Actin filament-associated protein 1-like 2 isoform 1"/>
    <property type="match status" value="1"/>
</dbReference>
<dbReference type="Gene3D" id="2.30.29.30">
    <property type="entry name" value="Pleckstrin-homology domain (PH domain)/Phosphotyrosine-binding domain (PTB)"/>
    <property type="match status" value="2"/>
</dbReference>
<dbReference type="InterPro" id="IPR030113">
    <property type="entry name" value="AFAP"/>
</dbReference>
<dbReference type="InterPro" id="IPR011993">
    <property type="entry name" value="PH-like_dom_sf"/>
</dbReference>
<dbReference type="InterPro" id="IPR001849">
    <property type="entry name" value="PH_domain"/>
</dbReference>
<dbReference type="PANTHER" id="PTHR14338">
    <property type="entry name" value="ACTIN FILAMENT-ASSOCIATED PROTEIN 1 FAMILY MEMBER"/>
    <property type="match status" value="1"/>
</dbReference>
<dbReference type="PANTHER" id="PTHR14338:SF4">
    <property type="entry name" value="ACTIN FILAMENT-ASSOCIATED PROTEIN 1-LIKE 2"/>
    <property type="match status" value="1"/>
</dbReference>
<dbReference type="Pfam" id="PF00169">
    <property type="entry name" value="PH"/>
    <property type="match status" value="2"/>
</dbReference>
<dbReference type="SMART" id="SM00233">
    <property type="entry name" value="PH"/>
    <property type="match status" value="2"/>
</dbReference>
<dbReference type="SUPFAM" id="SSF50729">
    <property type="entry name" value="PH domain-like"/>
    <property type="match status" value="2"/>
</dbReference>
<dbReference type="PROSITE" id="PS50003">
    <property type="entry name" value="PH_DOMAIN"/>
    <property type="match status" value="2"/>
</dbReference>